<accession>Q57I99</accession>
<keyword id="KW-0548">Nucleotidyltransferase</keyword>
<keyword id="KW-0694">RNA-binding</keyword>
<keyword id="KW-0698">rRNA processing</keyword>
<keyword id="KW-0808">Transferase</keyword>
<keyword id="KW-0819">tRNA processing</keyword>
<keyword id="KW-0820">tRNA-binding</keyword>
<dbReference type="EC" id="2.7.7.56" evidence="1"/>
<dbReference type="EMBL" id="AE017220">
    <property type="protein sequence ID" value="AAX67563.1"/>
    <property type="molecule type" value="Genomic_DNA"/>
</dbReference>
<dbReference type="RefSeq" id="WP_001247081.1">
    <property type="nucleotide sequence ID" value="NC_006905.1"/>
</dbReference>
<dbReference type="SMR" id="Q57I99"/>
<dbReference type="KEGG" id="sec:SCH_3657"/>
<dbReference type="HOGENOM" id="CLU_050858_0_0_6"/>
<dbReference type="Proteomes" id="UP000000538">
    <property type="component" value="Chromosome"/>
</dbReference>
<dbReference type="GO" id="GO:0000175">
    <property type="term" value="F:3'-5'-RNA exonuclease activity"/>
    <property type="evidence" value="ECO:0007669"/>
    <property type="project" value="UniProtKB-UniRule"/>
</dbReference>
<dbReference type="GO" id="GO:0000049">
    <property type="term" value="F:tRNA binding"/>
    <property type="evidence" value="ECO:0007669"/>
    <property type="project" value="UniProtKB-UniRule"/>
</dbReference>
<dbReference type="GO" id="GO:0009022">
    <property type="term" value="F:tRNA nucleotidyltransferase activity"/>
    <property type="evidence" value="ECO:0007669"/>
    <property type="project" value="UniProtKB-UniRule"/>
</dbReference>
<dbReference type="GO" id="GO:0016075">
    <property type="term" value="P:rRNA catabolic process"/>
    <property type="evidence" value="ECO:0007669"/>
    <property type="project" value="UniProtKB-UniRule"/>
</dbReference>
<dbReference type="GO" id="GO:0006364">
    <property type="term" value="P:rRNA processing"/>
    <property type="evidence" value="ECO:0007669"/>
    <property type="project" value="UniProtKB-KW"/>
</dbReference>
<dbReference type="GO" id="GO:0008033">
    <property type="term" value="P:tRNA processing"/>
    <property type="evidence" value="ECO:0007669"/>
    <property type="project" value="UniProtKB-UniRule"/>
</dbReference>
<dbReference type="CDD" id="cd11362">
    <property type="entry name" value="RNase_PH_bact"/>
    <property type="match status" value="1"/>
</dbReference>
<dbReference type="FunFam" id="3.30.230.70:FF:000003">
    <property type="entry name" value="Ribonuclease PH"/>
    <property type="match status" value="1"/>
</dbReference>
<dbReference type="Gene3D" id="3.30.230.70">
    <property type="entry name" value="GHMP Kinase, N-terminal domain"/>
    <property type="match status" value="1"/>
</dbReference>
<dbReference type="HAMAP" id="MF_00564">
    <property type="entry name" value="RNase_PH"/>
    <property type="match status" value="1"/>
</dbReference>
<dbReference type="InterPro" id="IPR001247">
    <property type="entry name" value="ExoRNase_PH_dom1"/>
</dbReference>
<dbReference type="InterPro" id="IPR015847">
    <property type="entry name" value="ExoRNase_PH_dom2"/>
</dbReference>
<dbReference type="InterPro" id="IPR036345">
    <property type="entry name" value="ExoRNase_PH_dom2_sf"/>
</dbReference>
<dbReference type="InterPro" id="IPR027408">
    <property type="entry name" value="PNPase/RNase_PH_dom_sf"/>
</dbReference>
<dbReference type="InterPro" id="IPR020568">
    <property type="entry name" value="Ribosomal_Su5_D2-typ_SF"/>
</dbReference>
<dbReference type="InterPro" id="IPR050080">
    <property type="entry name" value="RNase_PH"/>
</dbReference>
<dbReference type="InterPro" id="IPR002381">
    <property type="entry name" value="RNase_PH_bac-type"/>
</dbReference>
<dbReference type="InterPro" id="IPR018336">
    <property type="entry name" value="RNase_PH_CS"/>
</dbReference>
<dbReference type="NCBIfam" id="TIGR01966">
    <property type="entry name" value="RNasePH"/>
    <property type="match status" value="1"/>
</dbReference>
<dbReference type="PANTHER" id="PTHR11953">
    <property type="entry name" value="EXOSOME COMPLEX COMPONENT"/>
    <property type="match status" value="1"/>
</dbReference>
<dbReference type="PANTHER" id="PTHR11953:SF0">
    <property type="entry name" value="EXOSOME COMPLEX COMPONENT RRP41"/>
    <property type="match status" value="1"/>
</dbReference>
<dbReference type="Pfam" id="PF01138">
    <property type="entry name" value="RNase_PH"/>
    <property type="match status" value="1"/>
</dbReference>
<dbReference type="Pfam" id="PF03725">
    <property type="entry name" value="RNase_PH_C"/>
    <property type="match status" value="1"/>
</dbReference>
<dbReference type="SUPFAM" id="SSF55666">
    <property type="entry name" value="Ribonuclease PH domain 2-like"/>
    <property type="match status" value="1"/>
</dbReference>
<dbReference type="SUPFAM" id="SSF54211">
    <property type="entry name" value="Ribosomal protein S5 domain 2-like"/>
    <property type="match status" value="1"/>
</dbReference>
<dbReference type="PROSITE" id="PS01277">
    <property type="entry name" value="RIBONUCLEASE_PH"/>
    <property type="match status" value="1"/>
</dbReference>
<organism>
    <name type="scientific">Salmonella choleraesuis (strain SC-B67)</name>
    <dbReference type="NCBI Taxonomy" id="321314"/>
    <lineage>
        <taxon>Bacteria</taxon>
        <taxon>Pseudomonadati</taxon>
        <taxon>Pseudomonadota</taxon>
        <taxon>Gammaproteobacteria</taxon>
        <taxon>Enterobacterales</taxon>
        <taxon>Enterobacteriaceae</taxon>
        <taxon>Salmonella</taxon>
    </lineage>
</organism>
<evidence type="ECO:0000255" key="1">
    <source>
        <dbReference type="HAMAP-Rule" id="MF_00564"/>
    </source>
</evidence>
<protein>
    <recommendedName>
        <fullName evidence="1">Ribonuclease PH</fullName>
        <shortName evidence="1">RNase PH</shortName>
        <ecNumber evidence="1">2.7.7.56</ecNumber>
    </recommendedName>
    <alternativeName>
        <fullName evidence="1">tRNA nucleotidyltransferase</fullName>
    </alternativeName>
</protein>
<reference key="1">
    <citation type="journal article" date="2005" name="Nucleic Acids Res.">
        <title>The genome sequence of Salmonella enterica serovar Choleraesuis, a highly invasive and resistant zoonotic pathogen.</title>
        <authorList>
            <person name="Chiu C.-H."/>
            <person name="Tang P."/>
            <person name="Chu C."/>
            <person name="Hu S."/>
            <person name="Bao Q."/>
            <person name="Yu J."/>
            <person name="Chou Y.-Y."/>
            <person name="Wang H.-S."/>
            <person name="Lee Y.-S."/>
        </authorList>
    </citation>
    <scope>NUCLEOTIDE SEQUENCE [LARGE SCALE GENOMIC DNA]</scope>
    <source>
        <strain>SC-B67</strain>
    </source>
</reference>
<gene>
    <name evidence="1" type="primary">rph</name>
    <name type="ordered locus">SCH_3657</name>
</gene>
<feature type="chain" id="PRO_1000024876" description="Ribonuclease PH">
    <location>
        <begin position="1"/>
        <end position="238"/>
    </location>
</feature>
<feature type="binding site" evidence="1">
    <location>
        <position position="86"/>
    </location>
    <ligand>
        <name>phosphate</name>
        <dbReference type="ChEBI" id="CHEBI:43474"/>
        <note>substrate</note>
    </ligand>
</feature>
<feature type="binding site" evidence="1">
    <location>
        <begin position="124"/>
        <end position="126"/>
    </location>
    <ligand>
        <name>phosphate</name>
        <dbReference type="ChEBI" id="CHEBI:43474"/>
        <note>substrate</note>
    </ligand>
</feature>
<comment type="function">
    <text evidence="1">Phosphorolytic 3'-5' exoribonuclease that plays an important role in tRNA 3'-end maturation. Removes nucleotide residues following the 3'-CCA terminus of tRNAs; can also add nucleotides to the ends of RNA molecules by using nucleoside diphosphates as substrates, but this may not be physiologically important. Probably plays a role in initiation of 16S rRNA degradation (leading to ribosome degradation) during starvation.</text>
</comment>
<comment type="catalytic activity">
    <reaction evidence="1">
        <text>tRNA(n+1) + phosphate = tRNA(n) + a ribonucleoside 5'-diphosphate</text>
        <dbReference type="Rhea" id="RHEA:10628"/>
        <dbReference type="Rhea" id="RHEA-COMP:17343"/>
        <dbReference type="Rhea" id="RHEA-COMP:17344"/>
        <dbReference type="ChEBI" id="CHEBI:43474"/>
        <dbReference type="ChEBI" id="CHEBI:57930"/>
        <dbReference type="ChEBI" id="CHEBI:173114"/>
        <dbReference type="EC" id="2.7.7.56"/>
    </reaction>
</comment>
<comment type="subunit">
    <text evidence="1">Homohexameric ring arranged as a trimer of dimers.</text>
</comment>
<comment type="similarity">
    <text evidence="1">Belongs to the RNase PH family.</text>
</comment>
<proteinExistence type="inferred from homology"/>
<name>RNPH_SALCH</name>
<sequence length="238" mass="25255">MRPAGRSANQVRPVTLTRNYTKHAEGSVLVEFGDTKVLCTASIEEGVPRFLKGQGQGWITAEYGMLPRATHTRNAREAAKGKQGGRTMEIQRLIARALRAAVDLKTLGEFTITLDCDVVQADGGTRTASITGACVALADALNKLVANGKLKTNPMKGMVAAVSVGIVNGEAICDLEYVEDSAAETDMNVVMTEDGRIIEVQGTAEGEPFSHEELLTLLALARGGIESIVATQKAALEN</sequence>